<feature type="chain" id="PRO_1000201708" description="DNA primase DnaG">
    <location>
        <begin position="1"/>
        <end position="402"/>
    </location>
</feature>
<feature type="domain" description="Toprim" evidence="1">
    <location>
        <begin position="165"/>
        <end position="243"/>
    </location>
</feature>
<feature type="binding site" evidence="1">
    <location>
        <position position="171"/>
    </location>
    <ligand>
        <name>Mg(2+)</name>
        <dbReference type="ChEBI" id="CHEBI:18420"/>
        <label>1</label>
        <note>catalytic</note>
    </ligand>
</feature>
<feature type="binding site" evidence="1">
    <location>
        <position position="216"/>
    </location>
    <ligand>
        <name>Mg(2+)</name>
        <dbReference type="ChEBI" id="CHEBI:18420"/>
        <label>1</label>
        <note>catalytic</note>
    </ligand>
</feature>
<feature type="binding site" evidence="1">
    <location>
        <position position="216"/>
    </location>
    <ligand>
        <name>Mg(2+)</name>
        <dbReference type="ChEBI" id="CHEBI:18420"/>
        <label>2</label>
    </ligand>
</feature>
<feature type="binding site" evidence="1">
    <location>
        <position position="218"/>
    </location>
    <ligand>
        <name>Mg(2+)</name>
        <dbReference type="ChEBI" id="CHEBI:18420"/>
        <label>2</label>
    </ligand>
</feature>
<comment type="function">
    <text evidence="1">RNA polymerase that catalyzes the synthesis of short RNA molecules used as primers for DNA polymerase during DNA replication. Also part of the exosome, which is a complex involved in RNA degradation. Acts as a poly(A)-binding protein that enhances the interaction between heteromeric, adenine-rich transcripts and the exosome.</text>
</comment>
<comment type="catalytic activity">
    <reaction evidence="1">
        <text>ssDNA + n NTP = ssDNA/pppN(pN)n-1 hybrid + (n-1) diphosphate.</text>
        <dbReference type="EC" id="2.7.7.101"/>
    </reaction>
</comment>
<comment type="cofactor">
    <cofactor evidence="1">
        <name>Mg(2+)</name>
        <dbReference type="ChEBI" id="CHEBI:18420"/>
    </cofactor>
    <text evidence="1">Binds two Mg(2+) per subunit.</text>
</comment>
<comment type="subunit">
    <text evidence="1">Forms a ternary complex with MCM helicase and DNA. Component of the archaeal exosome complex.</text>
</comment>
<comment type="similarity">
    <text evidence="1">Belongs to the archaeal DnaG primase family.</text>
</comment>
<gene>
    <name evidence="1" type="primary">dnaG</name>
    <name type="ordered locus">M1627_2121</name>
</gene>
<dbReference type="EC" id="2.7.7.101" evidence="1"/>
<dbReference type="EMBL" id="CP001401">
    <property type="protein sequence ID" value="ACP55987.1"/>
    <property type="molecule type" value="Genomic_DNA"/>
</dbReference>
<dbReference type="RefSeq" id="WP_012712008.1">
    <property type="nucleotide sequence ID" value="NC_012632.1"/>
</dbReference>
<dbReference type="SMR" id="C3N047"/>
<dbReference type="GeneID" id="84059392"/>
<dbReference type="KEGG" id="sim:M1627_2121"/>
<dbReference type="HOGENOM" id="CLU_034626_0_0_2"/>
<dbReference type="Proteomes" id="UP000002307">
    <property type="component" value="Chromosome"/>
</dbReference>
<dbReference type="GO" id="GO:0005737">
    <property type="term" value="C:cytoplasm"/>
    <property type="evidence" value="ECO:0007669"/>
    <property type="project" value="TreeGrafter"/>
</dbReference>
<dbReference type="GO" id="GO:0000428">
    <property type="term" value="C:DNA-directed RNA polymerase complex"/>
    <property type="evidence" value="ECO:0007669"/>
    <property type="project" value="UniProtKB-KW"/>
</dbReference>
<dbReference type="GO" id="GO:0000178">
    <property type="term" value="C:exosome (RNase complex)"/>
    <property type="evidence" value="ECO:0007669"/>
    <property type="project" value="UniProtKB-KW"/>
</dbReference>
<dbReference type="GO" id="GO:1990077">
    <property type="term" value="C:primosome complex"/>
    <property type="evidence" value="ECO:0007669"/>
    <property type="project" value="UniProtKB-KW"/>
</dbReference>
<dbReference type="GO" id="GO:0003899">
    <property type="term" value="F:DNA-directed RNA polymerase activity"/>
    <property type="evidence" value="ECO:0007669"/>
    <property type="project" value="InterPro"/>
</dbReference>
<dbReference type="GO" id="GO:0046872">
    <property type="term" value="F:metal ion binding"/>
    <property type="evidence" value="ECO:0007669"/>
    <property type="project" value="UniProtKB-KW"/>
</dbReference>
<dbReference type="GO" id="GO:0008143">
    <property type="term" value="F:poly(A) binding"/>
    <property type="evidence" value="ECO:0007669"/>
    <property type="project" value="InterPro"/>
</dbReference>
<dbReference type="GO" id="GO:0006269">
    <property type="term" value="P:DNA replication, synthesis of primer"/>
    <property type="evidence" value="ECO:0007669"/>
    <property type="project" value="UniProtKB-UniRule"/>
</dbReference>
<dbReference type="CDD" id="cd01029">
    <property type="entry name" value="TOPRIM_primases"/>
    <property type="match status" value="1"/>
</dbReference>
<dbReference type="FunFam" id="3.40.1360.10:FF:000010">
    <property type="entry name" value="DNA primase DnaG"/>
    <property type="match status" value="1"/>
</dbReference>
<dbReference type="Gene3D" id="3.40.1360.10">
    <property type="match status" value="1"/>
</dbReference>
<dbReference type="HAMAP" id="MF_00007">
    <property type="entry name" value="DNA_primase_DnaG_arc"/>
    <property type="match status" value="1"/>
</dbReference>
<dbReference type="InterPro" id="IPR050219">
    <property type="entry name" value="DnaG_primase"/>
</dbReference>
<dbReference type="InterPro" id="IPR020607">
    <property type="entry name" value="Primase_DnaG_arc"/>
</dbReference>
<dbReference type="InterPro" id="IPR034154">
    <property type="entry name" value="TOPRIM_DnaG/twinkle"/>
</dbReference>
<dbReference type="InterPro" id="IPR006171">
    <property type="entry name" value="TOPRIM_dom"/>
</dbReference>
<dbReference type="NCBIfam" id="NF003108">
    <property type="entry name" value="PRK04031.1-1"/>
    <property type="match status" value="1"/>
</dbReference>
<dbReference type="PANTHER" id="PTHR30313">
    <property type="entry name" value="DNA PRIMASE"/>
    <property type="match status" value="1"/>
</dbReference>
<dbReference type="PANTHER" id="PTHR30313:SF2">
    <property type="entry name" value="DNA PRIMASE"/>
    <property type="match status" value="1"/>
</dbReference>
<dbReference type="Pfam" id="PF13662">
    <property type="entry name" value="Toprim_4"/>
    <property type="match status" value="1"/>
</dbReference>
<dbReference type="SMART" id="SM00493">
    <property type="entry name" value="TOPRIM"/>
    <property type="match status" value="1"/>
</dbReference>
<dbReference type="SUPFAM" id="SSF56731">
    <property type="entry name" value="DNA primase core"/>
    <property type="match status" value="1"/>
</dbReference>
<dbReference type="PROSITE" id="PS50880">
    <property type="entry name" value="TOPRIM"/>
    <property type="match status" value="1"/>
</dbReference>
<evidence type="ECO:0000255" key="1">
    <source>
        <dbReference type="HAMAP-Rule" id="MF_00007"/>
    </source>
</evidence>
<accession>C3N047</accession>
<protein>
    <recommendedName>
        <fullName evidence="1">DNA primase DnaG</fullName>
        <ecNumber evidence="1">2.7.7.101</ecNumber>
    </recommendedName>
</protein>
<reference key="1">
    <citation type="journal article" date="2009" name="Proc. Natl. Acad. Sci. U.S.A.">
        <title>Biogeography of the Sulfolobus islandicus pan-genome.</title>
        <authorList>
            <person name="Reno M.L."/>
            <person name="Held N.L."/>
            <person name="Fields C.J."/>
            <person name="Burke P.V."/>
            <person name="Whitaker R.J."/>
        </authorList>
    </citation>
    <scope>NUCLEOTIDE SEQUENCE [LARGE SCALE GENOMIC DNA]</scope>
    <source>
        <strain>M.16.27</strain>
    </source>
</reference>
<proteinExistence type="inferred from homology"/>
<sequence length="402" mass="44857">MKYDIKLRFEVEGIVEKTDVIGAIFGQTENLFGDEFDLRELQDKGRLGRIIVEIRTKGGKSEGEIIIPSNLDRIETALIAAMVESVDKVGPYNSKFELIEIEDIRAEKLKKIIERAKGILSSWSKEKSLDIKEVINEISSAVKVGEITEYGPERLPAGPDVDKDPNLIIVEGRADVINLLRYGYKNVIAVEGATSRIPETVVSLSKMKKTVIAFLDGDHGGDLILKELLSNNVKIDFVARAPVGREVEELTGKEIAKALSNMMPLTQYLKKIQEAEQAIAKNVIAKEEKPIQLEATQQLVQITLPQNVLEEIKKLPGTLEGVLYDNNWNLIEKVQVRDIIPKLEAYEDNKVAYIVFDGVITQRLLDLASQKNIKMIIGARIGGINKRPQNVDILTFTDIISS</sequence>
<keyword id="KW-0235">DNA replication</keyword>
<keyword id="KW-0240">DNA-directed RNA polymerase</keyword>
<keyword id="KW-0271">Exosome</keyword>
<keyword id="KW-0460">Magnesium</keyword>
<keyword id="KW-0479">Metal-binding</keyword>
<keyword id="KW-0548">Nucleotidyltransferase</keyword>
<keyword id="KW-0639">Primosome</keyword>
<keyword id="KW-0804">Transcription</keyword>
<keyword id="KW-0808">Transferase</keyword>
<name>DNAG_SACI3</name>
<organism>
    <name type="scientific">Saccharolobus islandicus (strain M.16.27)</name>
    <name type="common">Sulfolobus islandicus</name>
    <dbReference type="NCBI Taxonomy" id="427318"/>
    <lineage>
        <taxon>Archaea</taxon>
        <taxon>Thermoproteota</taxon>
        <taxon>Thermoprotei</taxon>
        <taxon>Sulfolobales</taxon>
        <taxon>Sulfolobaceae</taxon>
        <taxon>Saccharolobus</taxon>
    </lineage>
</organism>